<protein>
    <recommendedName>
        <fullName>Frataxin, mitochondrial</fullName>
        <shortName>Fxn</shortName>
        <ecNumber>1.16.3.1</ecNumber>
    </recommendedName>
</protein>
<keyword id="KW-0350">Heme biosynthesis</keyword>
<keyword id="KW-0406">Ion transport</keyword>
<keyword id="KW-0408">Iron</keyword>
<keyword id="KW-0409">Iron storage</keyword>
<keyword id="KW-0410">Iron transport</keyword>
<keyword id="KW-0496">Mitochondrion</keyword>
<keyword id="KW-0560">Oxidoreductase</keyword>
<keyword id="KW-1185">Reference proteome</keyword>
<keyword id="KW-0809">Transit peptide</keyword>
<keyword id="KW-0813">Transport</keyword>
<reference key="1">
    <citation type="submission" date="2001-07" db="EMBL/GenBank/DDBJ databases">
        <title>Characterization of the Caenorhabditis elegans ortholog of the frataxin.</title>
        <authorList>
            <person name="Vazquez-Manrique R.P."/>
            <person name="Baylis H.A."/>
            <person name="Palau F."/>
        </authorList>
    </citation>
    <scope>NUCLEOTIDE SEQUENCE [MRNA]</scope>
    <source>
        <strain>Bristol N2</strain>
    </source>
</reference>
<reference key="2">
    <citation type="journal article" date="1998" name="Science">
        <title>Genome sequence of the nematode C. elegans: a platform for investigating biology.</title>
        <authorList>
            <consortium name="The C. elegans sequencing consortium"/>
        </authorList>
    </citation>
    <scope>NUCLEOTIDE SEQUENCE [LARGE SCALE GENOMIC DNA]</scope>
    <source>
        <strain>Bristol N2</strain>
    </source>
</reference>
<reference key="3">
    <citation type="journal article" date="2006" name="FASEB J.">
        <title>Reduction of Caenorhabditis elegans frataxin increases sensitivity to oxidative stress, reduces lifespan, and causes lethality in a mitochondrial complex II mutant.</title>
        <authorList>
            <person name="Vazquez-Manrique R.P."/>
            <person name="Gonzalez-Cabo P."/>
            <person name="Ros S."/>
            <person name="Aziz H."/>
            <person name="Baylis H.A."/>
            <person name="Palau F."/>
        </authorList>
    </citation>
    <scope>FUNCTION</scope>
</reference>
<name>FRDA_CAEEL</name>
<sequence length="136" mass="15718">MLSTILRNNFVRRSFSSRIFSQNEYETAADSTLERLSDYFDQIADSFPVSEQFDVSHAMGVLTVNVSKSVGTYVINKQSPNKQIWLSSPMSGPKRYDLEEEGKWTYAHDGEQLDSLLNREFRKILADDRIDFSRHV</sequence>
<proteinExistence type="evidence at transcript level"/>
<evidence type="ECO:0000250" key="1"/>
<evidence type="ECO:0000250" key="2">
    <source>
        <dbReference type="UniProtKB" id="Q16595"/>
    </source>
</evidence>
<evidence type="ECO:0000255" key="3"/>
<evidence type="ECO:0000269" key="4">
    <source>
    </source>
</evidence>
<evidence type="ECO:0000305" key="5"/>
<accession>Q9TY03</accession>
<feature type="transit peptide" description="Mitochondrion" evidence="3">
    <location>
        <begin position="1"/>
        <end status="unknown"/>
    </location>
</feature>
<feature type="chain" id="PRO_0000193925" description="Frataxin, mitochondrial">
    <location>
        <begin status="unknown"/>
        <end position="136"/>
    </location>
</feature>
<gene>
    <name type="primary">frh-1</name>
    <name type="ORF">F59G1.7</name>
</gene>
<organism>
    <name type="scientific">Caenorhabditis elegans</name>
    <dbReference type="NCBI Taxonomy" id="6239"/>
    <lineage>
        <taxon>Eukaryota</taxon>
        <taxon>Metazoa</taxon>
        <taxon>Ecdysozoa</taxon>
        <taxon>Nematoda</taxon>
        <taxon>Chromadorea</taxon>
        <taxon>Rhabditida</taxon>
        <taxon>Rhabditina</taxon>
        <taxon>Rhabditomorpha</taxon>
        <taxon>Rhabditoidea</taxon>
        <taxon>Rhabditidae</taxon>
        <taxon>Peloderinae</taxon>
        <taxon>Caenorhabditis</taxon>
    </lineage>
</organism>
<comment type="function">
    <text evidence="4">Promotes the biosynthesis of heme as well as the assembly and repair of iron-sulfur clusters by delivering Fe(2+) to proteins involved in these pathways. May play a role in the protection against iron-catalyzed oxidative stress through its ability to catalyze the oxidation of Fe(2+) to Fe(3+). May be able to store large amounts of the metal in the form of a ferrihydrite mineral by oligomerization.</text>
</comment>
<comment type="catalytic activity">
    <reaction>
        <text>4 Fe(2+) + O2 + 4 H(+) = 4 Fe(3+) + 2 H2O</text>
        <dbReference type="Rhea" id="RHEA:11148"/>
        <dbReference type="ChEBI" id="CHEBI:15377"/>
        <dbReference type="ChEBI" id="CHEBI:15378"/>
        <dbReference type="ChEBI" id="CHEBI:15379"/>
        <dbReference type="ChEBI" id="CHEBI:29033"/>
        <dbReference type="ChEBI" id="CHEBI:29034"/>
        <dbReference type="EC" id="1.16.3.1"/>
    </reaction>
</comment>
<comment type="subunit">
    <text evidence="1">Monomer. Oligomer (By similarity).</text>
</comment>
<comment type="subcellular location">
    <subcellularLocation>
        <location evidence="2">Mitochondrion</location>
    </subcellularLocation>
</comment>
<comment type="similarity">
    <text evidence="5">Belongs to the frataxin family.</text>
</comment>
<dbReference type="EC" id="1.16.3.1"/>
<dbReference type="EMBL" id="AY048153">
    <property type="protein sequence ID" value="AAL05950.1"/>
    <property type="molecule type" value="mRNA"/>
</dbReference>
<dbReference type="EMBL" id="FO081244">
    <property type="protein sequence ID" value="CCD70156.1"/>
    <property type="molecule type" value="Genomic_DNA"/>
</dbReference>
<dbReference type="PIR" id="T34316">
    <property type="entry name" value="T34316"/>
</dbReference>
<dbReference type="RefSeq" id="NP_495183.1">
    <property type="nucleotide sequence ID" value="NM_062782.4"/>
</dbReference>
<dbReference type="SMR" id="Q9TY03"/>
<dbReference type="BioGRID" id="39343">
    <property type="interactions" value="3"/>
</dbReference>
<dbReference type="FunCoup" id="Q9TY03">
    <property type="interactions" value="778"/>
</dbReference>
<dbReference type="IntAct" id="Q9TY03">
    <property type="interactions" value="1"/>
</dbReference>
<dbReference type="STRING" id="6239.F59G1.7.1"/>
<dbReference type="PaxDb" id="6239-F59G1.7"/>
<dbReference type="PeptideAtlas" id="Q9TY03"/>
<dbReference type="EnsemblMetazoa" id="F59G1.7.1">
    <property type="protein sequence ID" value="F59G1.7.1"/>
    <property type="gene ID" value="WBGene00001486"/>
</dbReference>
<dbReference type="GeneID" id="174002"/>
<dbReference type="KEGG" id="cel:CELE_F59G1.7"/>
<dbReference type="UCSC" id="F59G1.7.1">
    <property type="organism name" value="c. elegans"/>
</dbReference>
<dbReference type="AGR" id="WB:WBGene00001486"/>
<dbReference type="CTD" id="174002"/>
<dbReference type="WormBase" id="F59G1.7">
    <property type="protein sequence ID" value="CE19476"/>
    <property type="gene ID" value="WBGene00001486"/>
    <property type="gene designation" value="frh-1"/>
</dbReference>
<dbReference type="eggNOG" id="KOG3413">
    <property type="taxonomic scope" value="Eukaryota"/>
</dbReference>
<dbReference type="GeneTree" id="ENSGT00390000005811"/>
<dbReference type="HOGENOM" id="CLU_080880_4_0_1"/>
<dbReference type="InParanoid" id="Q9TY03"/>
<dbReference type="OMA" id="SECEVEY"/>
<dbReference type="OrthoDB" id="1897642at2759"/>
<dbReference type="PhylomeDB" id="Q9TY03"/>
<dbReference type="Reactome" id="R-CEL-1362409">
    <property type="pathway name" value="Mitochondrial iron-sulfur cluster biogenesis"/>
</dbReference>
<dbReference type="Reactome" id="R-CEL-9854311">
    <property type="pathway name" value="Maturation of TCA enzymes and regulation of TCA cycle"/>
</dbReference>
<dbReference type="PRO" id="PR:Q9TY03"/>
<dbReference type="Proteomes" id="UP000001940">
    <property type="component" value="Chromosome II"/>
</dbReference>
<dbReference type="Bgee" id="WBGene00001486">
    <property type="expression patterns" value="Expressed in germ line (C elegans) and 4 other cell types or tissues"/>
</dbReference>
<dbReference type="GO" id="GO:0005739">
    <property type="term" value="C:mitochondrion"/>
    <property type="evidence" value="ECO:0000314"/>
    <property type="project" value="WormBase"/>
</dbReference>
<dbReference type="GO" id="GO:0051537">
    <property type="term" value="F:2 iron, 2 sulfur cluster binding"/>
    <property type="evidence" value="ECO:0000318"/>
    <property type="project" value="GO_Central"/>
</dbReference>
<dbReference type="GO" id="GO:0008199">
    <property type="term" value="F:ferric iron binding"/>
    <property type="evidence" value="ECO:0000318"/>
    <property type="project" value="GO_Central"/>
</dbReference>
<dbReference type="GO" id="GO:0008198">
    <property type="term" value="F:ferrous iron binding"/>
    <property type="evidence" value="ECO:0000318"/>
    <property type="project" value="GO_Central"/>
</dbReference>
<dbReference type="GO" id="GO:0004322">
    <property type="term" value="F:ferroxidase activity"/>
    <property type="evidence" value="ECO:0000318"/>
    <property type="project" value="GO_Central"/>
</dbReference>
<dbReference type="GO" id="GO:0034986">
    <property type="term" value="F:iron chaperone activity"/>
    <property type="evidence" value="ECO:0000318"/>
    <property type="project" value="GO_Central"/>
</dbReference>
<dbReference type="GO" id="GO:0008340">
    <property type="term" value="P:determination of adult lifespan"/>
    <property type="evidence" value="ECO:0000315"/>
    <property type="project" value="WormBase"/>
</dbReference>
<dbReference type="GO" id="GO:0006783">
    <property type="term" value="P:heme biosynthetic process"/>
    <property type="evidence" value="ECO:0007669"/>
    <property type="project" value="UniProtKB-KW"/>
</dbReference>
<dbReference type="GO" id="GO:0006879">
    <property type="term" value="P:intracellular iron ion homeostasis"/>
    <property type="evidence" value="ECO:0007669"/>
    <property type="project" value="UniProtKB-KW"/>
</dbReference>
<dbReference type="GO" id="GO:0006826">
    <property type="term" value="P:iron ion transport"/>
    <property type="evidence" value="ECO:0007669"/>
    <property type="project" value="UniProtKB-KW"/>
</dbReference>
<dbReference type="GO" id="GO:0016226">
    <property type="term" value="P:iron-sulfur cluster assembly"/>
    <property type="evidence" value="ECO:0000250"/>
    <property type="project" value="WormBase"/>
</dbReference>
<dbReference type="GO" id="GO:0042542">
    <property type="term" value="P:response to hydrogen peroxide"/>
    <property type="evidence" value="ECO:0000315"/>
    <property type="project" value="WormBase"/>
</dbReference>
<dbReference type="GO" id="GO:0000303">
    <property type="term" value="P:response to superoxide"/>
    <property type="evidence" value="ECO:0000315"/>
    <property type="project" value="WormBase"/>
</dbReference>
<dbReference type="CDD" id="cd00503">
    <property type="entry name" value="Frataxin"/>
    <property type="match status" value="1"/>
</dbReference>
<dbReference type="Gene3D" id="3.30.920.10">
    <property type="entry name" value="Frataxin/CyaY"/>
    <property type="match status" value="1"/>
</dbReference>
<dbReference type="InterPro" id="IPR017789">
    <property type="entry name" value="Frataxin"/>
</dbReference>
<dbReference type="InterPro" id="IPR002908">
    <property type="entry name" value="Frataxin/CyaY"/>
</dbReference>
<dbReference type="InterPro" id="IPR036524">
    <property type="entry name" value="Frataxin/CyaY_sf"/>
</dbReference>
<dbReference type="InterPro" id="IPR020895">
    <property type="entry name" value="Frataxin_CS"/>
</dbReference>
<dbReference type="NCBIfam" id="TIGR03421">
    <property type="entry name" value="FeS_CyaY"/>
    <property type="match status" value="1"/>
</dbReference>
<dbReference type="NCBIfam" id="TIGR03422">
    <property type="entry name" value="mito_frataxin"/>
    <property type="match status" value="1"/>
</dbReference>
<dbReference type="PANTHER" id="PTHR16821">
    <property type="entry name" value="FRATAXIN"/>
    <property type="match status" value="1"/>
</dbReference>
<dbReference type="PANTHER" id="PTHR16821:SF2">
    <property type="entry name" value="FRATAXIN, MITOCHONDRIAL"/>
    <property type="match status" value="1"/>
</dbReference>
<dbReference type="Pfam" id="PF01491">
    <property type="entry name" value="Frataxin_Cyay"/>
    <property type="match status" value="1"/>
</dbReference>
<dbReference type="PRINTS" id="PR00904">
    <property type="entry name" value="FRATAXIN"/>
</dbReference>
<dbReference type="SMART" id="SM01219">
    <property type="entry name" value="Frataxin_Cyay"/>
    <property type="match status" value="1"/>
</dbReference>
<dbReference type="SUPFAM" id="SSF55387">
    <property type="entry name" value="Frataxin/Nqo15-like"/>
    <property type="match status" value="1"/>
</dbReference>
<dbReference type="PROSITE" id="PS01344">
    <property type="entry name" value="FRATAXIN_1"/>
    <property type="match status" value="1"/>
</dbReference>
<dbReference type="PROSITE" id="PS50810">
    <property type="entry name" value="FRATAXIN_2"/>
    <property type="match status" value="1"/>
</dbReference>